<organism>
    <name type="scientific">Staphylococcus aureus (strain MW2)</name>
    <dbReference type="NCBI Taxonomy" id="196620"/>
    <lineage>
        <taxon>Bacteria</taxon>
        <taxon>Bacillati</taxon>
        <taxon>Bacillota</taxon>
        <taxon>Bacilli</taxon>
        <taxon>Bacillales</taxon>
        <taxon>Staphylococcaceae</taxon>
        <taxon>Staphylococcus</taxon>
    </lineage>
</organism>
<name>ARCR_STAAW</name>
<proteinExistence type="inferred from homology"/>
<dbReference type="EMBL" id="BA000033">
    <property type="protein sequence ID" value="BAB96417.1"/>
    <property type="molecule type" value="Genomic_DNA"/>
</dbReference>
<dbReference type="RefSeq" id="WP_000138213.1">
    <property type="nucleotide sequence ID" value="NC_003923.1"/>
</dbReference>
<dbReference type="SMR" id="Q8NUK9"/>
<dbReference type="KEGG" id="sam:MW2552"/>
<dbReference type="HOGENOM" id="CLU_1160528_0_0_9"/>
<dbReference type="GO" id="GO:0005737">
    <property type="term" value="C:cytoplasm"/>
    <property type="evidence" value="ECO:0007669"/>
    <property type="project" value="UniProtKB-SubCell"/>
</dbReference>
<dbReference type="GO" id="GO:0030552">
    <property type="term" value="F:cAMP binding"/>
    <property type="evidence" value="ECO:0007669"/>
    <property type="project" value="UniProtKB-KW"/>
</dbReference>
<dbReference type="GO" id="GO:0003677">
    <property type="term" value="F:DNA binding"/>
    <property type="evidence" value="ECO:0007669"/>
    <property type="project" value="UniProtKB-KW"/>
</dbReference>
<dbReference type="Gene3D" id="2.60.120.10">
    <property type="entry name" value="Jelly Rolls"/>
    <property type="match status" value="1"/>
</dbReference>
<dbReference type="Gene3D" id="1.10.10.10">
    <property type="entry name" value="Winged helix-like DNA-binding domain superfamily/Winged helix DNA-binding domain"/>
    <property type="match status" value="1"/>
</dbReference>
<dbReference type="InterPro" id="IPR000595">
    <property type="entry name" value="cNMP-bd_dom"/>
</dbReference>
<dbReference type="InterPro" id="IPR018490">
    <property type="entry name" value="cNMP-bd_dom_sf"/>
</dbReference>
<dbReference type="InterPro" id="IPR014710">
    <property type="entry name" value="RmlC-like_jellyroll"/>
</dbReference>
<dbReference type="InterPro" id="IPR036388">
    <property type="entry name" value="WH-like_DNA-bd_sf"/>
</dbReference>
<dbReference type="InterPro" id="IPR036390">
    <property type="entry name" value="WH_DNA-bd_sf"/>
</dbReference>
<dbReference type="Pfam" id="PF00027">
    <property type="entry name" value="cNMP_binding"/>
    <property type="match status" value="1"/>
</dbReference>
<dbReference type="SUPFAM" id="SSF51206">
    <property type="entry name" value="cAMP-binding domain-like"/>
    <property type="match status" value="1"/>
</dbReference>
<dbReference type="SUPFAM" id="SSF46785">
    <property type="entry name" value="Winged helix' DNA-binding domain"/>
    <property type="match status" value="1"/>
</dbReference>
<reference key="1">
    <citation type="journal article" date="2002" name="Lancet">
        <title>Genome and virulence determinants of high virulence community-acquired MRSA.</title>
        <authorList>
            <person name="Baba T."/>
            <person name="Takeuchi F."/>
            <person name="Kuroda M."/>
            <person name="Yuzawa H."/>
            <person name="Aoki K."/>
            <person name="Oguchi A."/>
            <person name="Nagai Y."/>
            <person name="Iwama N."/>
            <person name="Asano K."/>
            <person name="Naimi T."/>
            <person name="Kuroda H."/>
            <person name="Cui L."/>
            <person name="Yamamoto K."/>
            <person name="Hiramatsu K."/>
        </authorList>
    </citation>
    <scope>NUCLEOTIDE SEQUENCE [LARGE SCALE GENOMIC DNA]</scope>
    <source>
        <strain>MW2</strain>
    </source>
</reference>
<feature type="chain" id="PRO_0000349412" description="HTH-type transcriptional regulator ArcR">
    <location>
        <begin position="1"/>
        <end position="234"/>
    </location>
</feature>
<feature type="domain" description="HTH crp-type">
    <location>
        <begin position="155"/>
        <end position="228"/>
    </location>
</feature>
<feature type="DNA-binding region" description="H-T-H motif" evidence="1">
    <location>
        <begin position="188"/>
        <end position="207"/>
    </location>
</feature>
<feature type="binding site">
    <location>
        <begin position="40"/>
        <end position="129"/>
    </location>
    <ligand>
        <name>a nucleoside 3',5'-cyclic phosphate</name>
        <dbReference type="ChEBI" id="CHEBI:58464"/>
    </ligand>
</feature>
<protein>
    <recommendedName>
        <fullName>HTH-type transcriptional regulator ArcR</fullName>
    </recommendedName>
</protein>
<keyword id="KW-0010">Activator</keyword>
<keyword id="KW-0114">cAMP</keyword>
<keyword id="KW-0116">cAMP-binding</keyword>
<keyword id="KW-0963">Cytoplasm</keyword>
<keyword id="KW-0238">DNA-binding</keyword>
<keyword id="KW-0547">Nucleotide-binding</keyword>
<keyword id="KW-0804">Transcription</keyword>
<keyword id="KW-0805">Transcription regulation</keyword>
<accession>Q8NUK9</accession>
<comment type="function">
    <text evidence="1">Positively regulates the expression of the arcABDCR operon under anaerobic conditions, thus playing an essential role in arginine catabolism. May also control the expression of genes encoding proteins which are involved in anaerobic metabolism. Can bind cyclic AMP (By similarity).</text>
</comment>
<comment type="subcellular location">
    <subcellularLocation>
        <location evidence="1">Cytoplasm</location>
    </subcellularLocation>
</comment>
<sequence length="234" mass="27463">MTENFILGRNNKLEHELKALADYINIPYSILQPYQSECFVRHYTKGQVIYFSPQESSNIYFLIEGNIIREHYNQNGDVYRYFNKEQVLFPISNLFHPKEVNELCTALTDCTVLGLPRELMAFLCKANDDIFLTLFALINDNEQQHMNYNMALTSKFAKDRIIKLFCHLCQTVGYDQDEFYEIKQFLTIQLMSDMAGISRETAGHIIHELKDEKLVVKDHKNWLVSKHLFNDVCV</sequence>
<gene>
    <name type="primary">arcR</name>
    <name type="ordered locus">MW2552</name>
</gene>
<evidence type="ECO:0000250" key="1"/>